<feature type="chain" id="PRO_0000393958" description="Mapk-regulated corepressor-interacting protein 1">
    <location>
        <begin position="1"/>
        <end position="97"/>
    </location>
</feature>
<feature type="region of interest" description="Disordered" evidence="2">
    <location>
        <begin position="1"/>
        <end position="29"/>
    </location>
</feature>
<feature type="region of interest" description="Disordered" evidence="2">
    <location>
        <begin position="72"/>
        <end position="97"/>
    </location>
</feature>
<feature type="compositionally biased region" description="Polar residues" evidence="2">
    <location>
        <begin position="17"/>
        <end position="28"/>
    </location>
</feature>
<feature type="compositionally biased region" description="Basic and acidic residues" evidence="2">
    <location>
        <begin position="82"/>
        <end position="97"/>
    </location>
</feature>
<dbReference type="EMBL" id="BC155036">
    <property type="protein sequence ID" value="AAI55037.1"/>
    <property type="molecule type" value="mRNA"/>
</dbReference>
<dbReference type="EMBL" id="BC161072">
    <property type="protein sequence ID" value="AAI61072.1"/>
    <property type="molecule type" value="mRNA"/>
</dbReference>
<dbReference type="RefSeq" id="NP_001106568.1">
    <property type="nucleotide sequence ID" value="NM_001113097.1"/>
</dbReference>
<dbReference type="RefSeq" id="XP_012821395.1">
    <property type="nucleotide sequence ID" value="XM_012965941.2"/>
</dbReference>
<dbReference type="RefSeq" id="XP_012821396.1">
    <property type="nucleotide sequence ID" value="XM_012965942.2"/>
</dbReference>
<dbReference type="RefSeq" id="XP_012821397.1">
    <property type="nucleotide sequence ID" value="XM_012965943.2"/>
</dbReference>
<dbReference type="RefSeq" id="XP_012821398.1">
    <property type="nucleotide sequence ID" value="XM_012965944.2"/>
</dbReference>
<dbReference type="RefSeq" id="XP_012821399.1">
    <property type="nucleotide sequence ID" value="XM_012965945.2"/>
</dbReference>
<dbReference type="SMR" id="A9JSQ8"/>
<dbReference type="FunCoup" id="A9JSQ8">
    <property type="interactions" value="840"/>
</dbReference>
<dbReference type="STRING" id="8364.ENSXETP00000002238"/>
<dbReference type="PaxDb" id="8364-ENSXETP00000011922"/>
<dbReference type="GeneID" id="100127775"/>
<dbReference type="KEGG" id="xtr:100127775"/>
<dbReference type="CTD" id="348262"/>
<dbReference type="eggNOG" id="ENOG502S25D">
    <property type="taxonomic scope" value="Eukaryota"/>
</dbReference>
<dbReference type="HOGENOM" id="CLU_161057_0_0_1"/>
<dbReference type="InParanoid" id="A9JSQ8"/>
<dbReference type="OMA" id="PQNHERN"/>
<dbReference type="OrthoDB" id="8170061at2759"/>
<dbReference type="PhylomeDB" id="A9JSQ8"/>
<dbReference type="TreeFam" id="TF326620"/>
<dbReference type="Proteomes" id="UP000008143">
    <property type="component" value="Chromosome 10"/>
</dbReference>
<dbReference type="ExpressionAtlas" id="A9JSQ8">
    <property type="expression patterns" value="differential"/>
</dbReference>
<dbReference type="GO" id="GO:0005737">
    <property type="term" value="C:cytoplasm"/>
    <property type="evidence" value="ECO:0000250"/>
    <property type="project" value="UniProtKB"/>
</dbReference>
<dbReference type="GO" id="GO:0010494">
    <property type="term" value="C:cytoplasmic stress granule"/>
    <property type="evidence" value="ECO:0000250"/>
    <property type="project" value="UniProtKB"/>
</dbReference>
<dbReference type="GO" id="GO:0005634">
    <property type="term" value="C:nucleus"/>
    <property type="evidence" value="ECO:0000250"/>
    <property type="project" value="UniProtKB"/>
</dbReference>
<dbReference type="GO" id="GO:0010717">
    <property type="term" value="P:regulation of epithelial to mesenchymal transition"/>
    <property type="evidence" value="ECO:0000250"/>
    <property type="project" value="UniProtKB"/>
</dbReference>
<dbReference type="InterPro" id="IPR029428">
    <property type="entry name" value="MCRIP"/>
</dbReference>
<dbReference type="Pfam" id="PF14799">
    <property type="entry name" value="FAM195"/>
    <property type="match status" value="1"/>
</dbReference>
<proteinExistence type="inferred from homology"/>
<evidence type="ECO:0000250" key="1">
    <source>
        <dbReference type="UniProtKB" id="C9JLW8"/>
    </source>
</evidence>
<evidence type="ECO:0000256" key="2">
    <source>
        <dbReference type="SAM" id="MobiDB-lite"/>
    </source>
</evidence>
<evidence type="ECO:0000305" key="3"/>
<reference key="1">
    <citation type="submission" date="2007-11" db="EMBL/GenBank/DDBJ databases">
        <authorList>
            <consortium name="NIH - Xenopus Gene Collection (XGC) project"/>
        </authorList>
    </citation>
    <scope>NUCLEOTIDE SEQUENCE [LARGE SCALE MRNA]</scope>
    <source>
        <tissue>Brain</tissue>
        <tissue>Embryo</tissue>
    </source>
</reference>
<name>MCRI1_XENTR</name>
<comment type="function">
    <text evidence="1">May play a role in the regulation of the epithelial-mesenchymal transition.</text>
</comment>
<comment type="subcellular location">
    <subcellularLocation>
        <location evidence="1">Nucleus</location>
    </subcellularLocation>
    <subcellularLocation>
        <location evidence="1">Cytoplasm</location>
        <location evidence="1">Stress granule</location>
    </subcellularLocation>
</comment>
<comment type="similarity">
    <text evidence="3">Belongs to the MCRIP family.</text>
</comment>
<protein>
    <recommendedName>
        <fullName>Mapk-regulated corepressor-interacting protein 1</fullName>
    </recommendedName>
    <alternativeName>
        <fullName>Protein FAM195B</fullName>
    </alternativeName>
</protein>
<accession>A9JSQ8</accession>
<keyword id="KW-0963">Cytoplasm</keyword>
<keyword id="KW-0539">Nucleus</keyword>
<keyword id="KW-1185">Reference proteome</keyword>
<gene>
    <name type="primary">Mcrip1</name>
    <name type="synonym">fam195b</name>
</gene>
<sequence length="97" mass="11143">MTSSPVSRVVYNGKRPASNTRSPSSNEIFTPAHEENVRFIYEAWQCVERDLRNQVSGMDRGVVEEYVEKNPSNSLKSFKPIDLNDLKRRTVQDPKKS</sequence>
<organism>
    <name type="scientific">Xenopus tropicalis</name>
    <name type="common">Western clawed frog</name>
    <name type="synonym">Silurana tropicalis</name>
    <dbReference type="NCBI Taxonomy" id="8364"/>
    <lineage>
        <taxon>Eukaryota</taxon>
        <taxon>Metazoa</taxon>
        <taxon>Chordata</taxon>
        <taxon>Craniata</taxon>
        <taxon>Vertebrata</taxon>
        <taxon>Euteleostomi</taxon>
        <taxon>Amphibia</taxon>
        <taxon>Batrachia</taxon>
        <taxon>Anura</taxon>
        <taxon>Pipoidea</taxon>
        <taxon>Pipidae</taxon>
        <taxon>Xenopodinae</taxon>
        <taxon>Xenopus</taxon>
        <taxon>Silurana</taxon>
    </lineage>
</organism>